<keyword id="KW-0050">Antiport</keyword>
<keyword id="KW-0333">Golgi apparatus</keyword>
<keyword id="KW-0472">Membrane</keyword>
<keyword id="KW-1185">Reference proteome</keyword>
<keyword id="KW-0762">Sugar transport</keyword>
<keyword id="KW-0812">Transmembrane</keyword>
<keyword id="KW-1133">Transmembrane helix</keyword>
<keyword id="KW-0813">Transport</keyword>
<proteinExistence type="evidence at protein level"/>
<name>S35A2_MOUSE</name>
<dbReference type="EMBL" id="AB027147">
    <property type="protein sequence ID" value="BAA86885.1"/>
    <property type="molecule type" value="mRNA"/>
</dbReference>
<dbReference type="EMBL" id="BC037701">
    <property type="protein sequence ID" value="AAH37701.1"/>
    <property type="molecule type" value="mRNA"/>
</dbReference>
<dbReference type="CCDS" id="CCDS52987.1"/>
<dbReference type="PIR" id="JC7162">
    <property type="entry name" value="JC7162"/>
</dbReference>
<dbReference type="RefSeq" id="NP_001077406.1">
    <property type="nucleotide sequence ID" value="NM_001083937.2"/>
</dbReference>
<dbReference type="SMR" id="Q9R0M8"/>
<dbReference type="BioGRID" id="204431">
    <property type="interactions" value="1"/>
</dbReference>
<dbReference type="FunCoup" id="Q9R0M8">
    <property type="interactions" value="1487"/>
</dbReference>
<dbReference type="STRING" id="10090.ENSMUSP00000111327"/>
<dbReference type="TCDB" id="2.A.7.12.8">
    <property type="family name" value="the drug/metabolite transporter (dmt) superfamily"/>
</dbReference>
<dbReference type="GlyGen" id="Q9R0M8">
    <property type="glycosylation" value="5 sites"/>
</dbReference>
<dbReference type="iPTMnet" id="Q9R0M8"/>
<dbReference type="PhosphoSitePlus" id="Q9R0M8"/>
<dbReference type="SwissPalm" id="Q9R0M8"/>
<dbReference type="PaxDb" id="10090-ENSMUSP00000111327"/>
<dbReference type="ProteomicsDB" id="256879"/>
<dbReference type="Pumba" id="Q9R0M8"/>
<dbReference type="Antibodypedia" id="25927">
    <property type="antibodies" value="66 antibodies from 17 providers"/>
</dbReference>
<dbReference type="DNASU" id="22232"/>
<dbReference type="Ensembl" id="ENSMUST00000115660.12">
    <property type="protein sequence ID" value="ENSMUSP00000111324.5"/>
    <property type="gene ID" value="ENSMUSG00000031156.19"/>
</dbReference>
<dbReference type="Ensembl" id="ENSMUST00000155967.3">
    <property type="protein sequence ID" value="ENSMUSP00000146730.2"/>
    <property type="gene ID" value="ENSMUSG00000031156.19"/>
</dbReference>
<dbReference type="GeneID" id="22232"/>
<dbReference type="KEGG" id="mmu:22232"/>
<dbReference type="UCSC" id="uc009sna.1">
    <property type="organism name" value="mouse"/>
</dbReference>
<dbReference type="AGR" id="MGI:1345297"/>
<dbReference type="CTD" id="7355"/>
<dbReference type="MGI" id="MGI:1345297">
    <property type="gene designation" value="Slc35a2"/>
</dbReference>
<dbReference type="VEuPathDB" id="HostDB:ENSMUSG00000031156"/>
<dbReference type="eggNOG" id="KOG2234">
    <property type="taxonomic scope" value="Eukaryota"/>
</dbReference>
<dbReference type="GeneTree" id="ENSGT00950000182827"/>
<dbReference type="InParanoid" id="Q9R0M8"/>
<dbReference type="OrthoDB" id="408493at2759"/>
<dbReference type="Reactome" id="R-MMU-727802">
    <property type="pathway name" value="Transport of nucleotide sugars"/>
</dbReference>
<dbReference type="BioGRID-ORCS" id="22232">
    <property type="hits" value="21 hits in 79 CRISPR screens"/>
</dbReference>
<dbReference type="ChiTaRS" id="Slc35a2">
    <property type="organism name" value="mouse"/>
</dbReference>
<dbReference type="PRO" id="PR:Q9R0M8"/>
<dbReference type="Proteomes" id="UP000000589">
    <property type="component" value="Chromosome X"/>
</dbReference>
<dbReference type="RNAct" id="Q9R0M8">
    <property type="molecule type" value="protein"/>
</dbReference>
<dbReference type="Bgee" id="ENSMUSG00000031156">
    <property type="expression patterns" value="Expressed in left colon and 254 other cell types or tissues"/>
</dbReference>
<dbReference type="ExpressionAtlas" id="Q9R0M8">
    <property type="expression patterns" value="baseline and differential"/>
</dbReference>
<dbReference type="GO" id="GO:0000139">
    <property type="term" value="C:Golgi membrane"/>
    <property type="evidence" value="ECO:0000314"/>
    <property type="project" value="MGI"/>
</dbReference>
<dbReference type="GO" id="GO:0015297">
    <property type="term" value="F:antiporter activity"/>
    <property type="evidence" value="ECO:0007669"/>
    <property type="project" value="UniProtKB-KW"/>
</dbReference>
<dbReference type="GO" id="GO:0005459">
    <property type="term" value="F:UDP-galactose transmembrane transporter activity"/>
    <property type="evidence" value="ECO:0000314"/>
    <property type="project" value="MGI"/>
</dbReference>
<dbReference type="GO" id="GO:0072334">
    <property type="term" value="P:UDP-galactose transmembrane transport"/>
    <property type="evidence" value="ECO:0000314"/>
    <property type="project" value="MGI"/>
</dbReference>
<dbReference type="FunFam" id="1.10.3730.20:FF:000037">
    <property type="entry name" value="Nucleotide Sugar TransPorter family"/>
    <property type="match status" value="1"/>
</dbReference>
<dbReference type="InterPro" id="IPR007271">
    <property type="entry name" value="Nuc_sug_transpt"/>
</dbReference>
<dbReference type="NCBIfam" id="TIGR00803">
    <property type="entry name" value="nst"/>
    <property type="match status" value="1"/>
</dbReference>
<dbReference type="PANTHER" id="PTHR10231">
    <property type="entry name" value="NUCLEOTIDE-SUGAR TRANSMEMBRANE TRANSPORTER"/>
    <property type="match status" value="1"/>
</dbReference>
<dbReference type="Pfam" id="PF04142">
    <property type="entry name" value="Nuc_sug_transp"/>
    <property type="match status" value="1"/>
</dbReference>
<dbReference type="PIRSF" id="PIRSF005799">
    <property type="entry name" value="UDP-gal_transpt"/>
    <property type="match status" value="1"/>
</dbReference>
<dbReference type="SUPFAM" id="SSF103481">
    <property type="entry name" value="Multidrug resistance efflux transporter EmrE"/>
    <property type="match status" value="1"/>
</dbReference>
<accession>Q9R0M8</accession>
<comment type="function">
    <text evidence="1 4">Transports uridine diphosphate galactose (UDP-galactose) from the cytosol into the Golgi apparatus (PubMed:10578063). It functions as an antiporter that exchanges UDP-galactose for UMP (By similarity). It is also able to exchange UDP-galactose for AMP and CMP, and to transport UDP-N-acetylgalactosamine (UDP-GalNAc) and other nucleotide sugars (By similarity). As a provider of UDP-galactose to galactosyltransferases present in the Golgi apparatus, it is necessary for globotriaosylceramide/globoside (Gb3Cer) synthesis from lactosylceramide (By similarity).</text>
</comment>
<comment type="catalytic activity">
    <reaction evidence="1">
        <text>UMP(out) + UDP-alpha-D-galactose(in) = UMP(in) + UDP-alpha-D-galactose(out)</text>
        <dbReference type="Rhea" id="RHEA:72703"/>
        <dbReference type="ChEBI" id="CHEBI:57865"/>
        <dbReference type="ChEBI" id="CHEBI:66914"/>
    </reaction>
</comment>
<comment type="catalytic activity">
    <reaction evidence="1">
        <text>UDP-N-acetyl-alpha-D-galactosamine(in) + UMP(out) = UDP-N-acetyl-alpha-D-galactosamine(out) + UMP(in)</text>
        <dbReference type="Rhea" id="RHEA:72735"/>
        <dbReference type="ChEBI" id="CHEBI:57865"/>
        <dbReference type="ChEBI" id="CHEBI:67138"/>
    </reaction>
</comment>
<comment type="catalytic activity">
    <reaction evidence="1">
        <text>UMP(out) + UDP-alpha-D-glucose(in) = UMP(in) + UDP-alpha-D-glucose(out)</text>
        <dbReference type="Rhea" id="RHEA:72731"/>
        <dbReference type="ChEBI" id="CHEBI:57865"/>
        <dbReference type="ChEBI" id="CHEBI:58885"/>
    </reaction>
</comment>
<comment type="catalytic activity">
    <reaction evidence="1">
        <text>UMP(out) + UDP-N-acetyl-alpha-D-glucosamine(in) = UMP(in) + UDP-N-acetyl-alpha-D-glucosamine(out)</text>
        <dbReference type="Rhea" id="RHEA:72695"/>
        <dbReference type="ChEBI" id="CHEBI:57705"/>
        <dbReference type="ChEBI" id="CHEBI:57865"/>
    </reaction>
</comment>
<comment type="catalytic activity">
    <reaction evidence="1">
        <text>UDP-alpha-D-galactose(in) + AMP(out) = UDP-alpha-D-galactose(out) + AMP(in)</text>
        <dbReference type="Rhea" id="RHEA:74599"/>
        <dbReference type="ChEBI" id="CHEBI:66914"/>
        <dbReference type="ChEBI" id="CHEBI:456215"/>
    </reaction>
</comment>
<comment type="catalytic activity">
    <reaction evidence="1">
        <text>UDP-alpha-D-galactose(in) + CMP(out) = UDP-alpha-D-galactose(out) + CMP(in)</text>
        <dbReference type="Rhea" id="RHEA:74603"/>
        <dbReference type="ChEBI" id="CHEBI:60377"/>
        <dbReference type="ChEBI" id="CHEBI:66914"/>
    </reaction>
</comment>
<comment type="catalytic activity">
    <reaction evidence="1">
        <text>UDP-N-acetyl-alpha-D-galactosamine(out) + UDP-alpha-D-galactose(in) = UDP-N-acetyl-alpha-D-galactosamine(in) + UDP-alpha-D-galactose(out)</text>
        <dbReference type="Rhea" id="RHEA:74607"/>
        <dbReference type="ChEBI" id="CHEBI:66914"/>
        <dbReference type="ChEBI" id="CHEBI:67138"/>
    </reaction>
</comment>
<comment type="catalytic activity">
    <reaction evidence="1">
        <text>UDP-N-acetyl-alpha-D-glucosamine(out) + UDP-alpha-D-galactose(in) = UDP-N-acetyl-alpha-D-glucosamine(in) + UDP-alpha-D-galactose(out)</text>
        <dbReference type="Rhea" id="RHEA:74611"/>
        <dbReference type="ChEBI" id="CHEBI:57705"/>
        <dbReference type="ChEBI" id="CHEBI:66914"/>
    </reaction>
</comment>
<comment type="catalytic activity">
    <reaction evidence="1">
        <text>UDP-alpha-D-galactose(in) + UDP-alpha-D-glucose(out) = UDP-alpha-D-galactose(out) + UDP-alpha-D-glucose(in)</text>
        <dbReference type="Rhea" id="RHEA:74615"/>
        <dbReference type="ChEBI" id="CHEBI:58885"/>
        <dbReference type="ChEBI" id="CHEBI:66914"/>
    </reaction>
</comment>
<comment type="catalytic activity">
    <reaction evidence="1">
        <text>UMP(out) + CMP(in) = UMP(in) + CMP(out)</text>
        <dbReference type="Rhea" id="RHEA:74619"/>
        <dbReference type="ChEBI" id="CHEBI:57865"/>
        <dbReference type="ChEBI" id="CHEBI:60377"/>
    </reaction>
</comment>
<comment type="catalytic activity">
    <reaction evidence="1">
        <text>UMP(out) + AMP(in) = UMP(in) + AMP(out)</text>
        <dbReference type="Rhea" id="RHEA:74623"/>
        <dbReference type="ChEBI" id="CHEBI:57865"/>
        <dbReference type="ChEBI" id="CHEBI:456215"/>
    </reaction>
</comment>
<comment type="subunit">
    <text evidence="1">Interacts with SLC35A3; the interaction is reduced in the presence of SLC35A4 (By similarity). Found in a complex with SLC35A3 and SLC35A4 (By similarity).</text>
</comment>
<comment type="subcellular location">
    <subcellularLocation>
        <location evidence="1">Golgi apparatus membrane</location>
        <topology evidence="2">Multi-pass membrane protein</topology>
    </subcellularLocation>
</comment>
<comment type="similarity">
    <text evidence="5">Belongs to the nucleotide-sugar transporter family. SLC35A subfamily.</text>
</comment>
<protein>
    <recommendedName>
        <fullName evidence="1">UDP-galactose translocator</fullName>
    </recommendedName>
    <alternativeName>
        <fullName evidence="1">Solute carrier family 35 member A2</fullName>
    </alternativeName>
    <alternativeName>
        <fullName>UDP-galactose transporter</fullName>
        <shortName>UDP-Gal-Tr</shortName>
        <shortName>UGT</shortName>
        <shortName>mUGT1</shortName>
    </alternativeName>
</protein>
<evidence type="ECO:0000250" key="1">
    <source>
        <dbReference type="UniProtKB" id="P78381"/>
    </source>
</evidence>
<evidence type="ECO:0000255" key="2"/>
<evidence type="ECO:0000256" key="3">
    <source>
        <dbReference type="SAM" id="MobiDB-lite"/>
    </source>
</evidence>
<evidence type="ECO:0000269" key="4">
    <source>
    </source>
</evidence>
<evidence type="ECO:0000305" key="5"/>
<evidence type="ECO:0000312" key="6">
    <source>
        <dbReference type="MGI" id="MGI:1345297"/>
    </source>
</evidence>
<sequence length="390" mass="40766">MAAVGVGGSTAAAGAGAVSSGALEPGSTTAAHRRLKYISLAVLVVQNASLILSIRYARTLPGDRFFATTAVVMAEVLKGLTCLLLLFAQKRGNVKHLVLFLHEAVLVQYVDTLKLAVPSLIYTLQNNLQYVAISNLPAATFQVTYQLKILTTALFSVLMLNRSLSRLQWASLLLLFTGVAIVQAQQAGGSGPRPLDQNPGAGLAAVVASCLSSGFAGVYFEKILKGSSGSVWLRNLQLGLFGTALGLVGLWWAEGTAVASQGFFFGYTPAVWGVVLNQAFGGLLVAVVVKYADNILKGFATSLSIVLSTVASIRLFGFHLDPLFALGAGLVIGAVYLYSLPRGAVKAIASASASGPCIHQQPPGQPPPPQLSSRGDLTTEPFLPKSVLVK</sequence>
<organism>
    <name type="scientific">Mus musculus</name>
    <name type="common">Mouse</name>
    <dbReference type="NCBI Taxonomy" id="10090"/>
    <lineage>
        <taxon>Eukaryota</taxon>
        <taxon>Metazoa</taxon>
        <taxon>Chordata</taxon>
        <taxon>Craniata</taxon>
        <taxon>Vertebrata</taxon>
        <taxon>Euteleostomi</taxon>
        <taxon>Mammalia</taxon>
        <taxon>Eutheria</taxon>
        <taxon>Euarchontoglires</taxon>
        <taxon>Glires</taxon>
        <taxon>Rodentia</taxon>
        <taxon>Myomorpha</taxon>
        <taxon>Muroidea</taxon>
        <taxon>Muridae</taxon>
        <taxon>Murinae</taxon>
        <taxon>Mus</taxon>
        <taxon>Mus</taxon>
    </lineage>
</organism>
<feature type="chain" id="PRO_0000213354" description="UDP-galactose translocator">
    <location>
        <begin position="1"/>
        <end position="390"/>
    </location>
</feature>
<feature type="transmembrane region" description="Helical" evidence="2">
    <location>
        <begin position="3"/>
        <end position="23"/>
    </location>
</feature>
<feature type="transmembrane region" description="Helical" evidence="2">
    <location>
        <begin position="37"/>
        <end position="57"/>
    </location>
</feature>
<feature type="transmembrane region" description="Helical" evidence="2">
    <location>
        <begin position="65"/>
        <end position="85"/>
    </location>
</feature>
<feature type="transmembrane region" description="Helical" evidence="2">
    <location>
        <begin position="97"/>
        <end position="117"/>
    </location>
</feature>
<feature type="transmembrane region" description="Helical" evidence="2">
    <location>
        <begin position="140"/>
        <end position="160"/>
    </location>
</feature>
<feature type="transmembrane region" description="Helical" evidence="2">
    <location>
        <begin position="169"/>
        <end position="189"/>
    </location>
</feature>
<feature type="transmembrane region" description="Helical" evidence="2">
    <location>
        <begin position="200"/>
        <end position="220"/>
    </location>
</feature>
<feature type="transmembrane region" description="Helical" evidence="2">
    <location>
        <begin position="238"/>
        <end position="258"/>
    </location>
</feature>
<feature type="transmembrane region" description="Helical" evidence="2">
    <location>
        <begin position="269"/>
        <end position="289"/>
    </location>
</feature>
<feature type="transmembrane region" description="Helical" evidence="2">
    <location>
        <begin position="315"/>
        <end position="335"/>
    </location>
</feature>
<feature type="region of interest" description="Disordered" evidence="3">
    <location>
        <begin position="1"/>
        <end position="24"/>
    </location>
</feature>
<feature type="region of interest" description="Disordered" evidence="3">
    <location>
        <begin position="356"/>
        <end position="390"/>
    </location>
</feature>
<feature type="compositionally biased region" description="Low complexity" evidence="3">
    <location>
        <begin position="9"/>
        <end position="22"/>
    </location>
</feature>
<reference key="1">
    <citation type="journal article" date="1999" name="J. Biochem.">
        <title>Indispensability of transmembrane domains of Golgi UDP-galactose transporter as revealed by analysis of genetic defects in UDP-galactose transporter-deficient murine had-1 mutant cell lines and construction of deletion mutants.</title>
        <authorList>
            <person name="Ishida N."/>
            <person name="Yoshioka S."/>
            <person name="Iida M."/>
            <person name="Sudo K."/>
            <person name="Miura N."/>
            <person name="Aoki K."/>
            <person name="Kawakita M."/>
        </authorList>
    </citation>
    <scope>NUCLEOTIDE SEQUENCE [MRNA]</scope>
    <scope>FUNCTION</scope>
    <source>
        <strain>BALB/cJ</strain>
    </source>
</reference>
<reference key="2">
    <citation type="journal article" date="2004" name="Genome Res.">
        <title>The status, quality, and expansion of the NIH full-length cDNA project: the Mammalian Gene Collection (MGC).</title>
        <authorList>
            <consortium name="The MGC Project Team"/>
        </authorList>
    </citation>
    <scope>NUCLEOTIDE SEQUENCE [LARGE SCALE MRNA]</scope>
    <source>
        <strain>FVB/N</strain>
        <tissue>Salivary gland</tissue>
    </source>
</reference>
<reference key="3">
    <citation type="journal article" date="2010" name="Cell">
        <title>A tissue-specific atlas of mouse protein phosphorylation and expression.</title>
        <authorList>
            <person name="Huttlin E.L."/>
            <person name="Jedrychowski M.P."/>
            <person name="Elias J.E."/>
            <person name="Goswami T."/>
            <person name="Rad R."/>
            <person name="Beausoleil S.A."/>
            <person name="Villen J."/>
            <person name="Haas W."/>
            <person name="Sowa M.E."/>
            <person name="Gygi S.P."/>
        </authorList>
    </citation>
    <scope>IDENTIFICATION BY MASS SPECTROMETRY [LARGE SCALE ANALYSIS]</scope>
    <source>
        <tissue>Pancreas</tissue>
    </source>
</reference>
<gene>
    <name evidence="6" type="primary">Slc35a2</name>
    <name type="synonym">Ugt1</name>
</gene>